<proteinExistence type="evidence at transcript level"/>
<keyword id="KW-0050">Antiport</keyword>
<keyword id="KW-0406">Ion transport</keyword>
<keyword id="KW-0472">Membrane</keyword>
<keyword id="KW-0630">Potassium</keyword>
<keyword id="KW-0633">Potassium transport</keyword>
<keyword id="KW-1185">Reference proteome</keyword>
<keyword id="KW-0812">Transmembrane</keyword>
<keyword id="KW-1133">Transmembrane helix</keyword>
<keyword id="KW-0813">Transport</keyword>
<organism>
    <name type="scientific">Arabidopsis thaliana</name>
    <name type="common">Mouse-ear cress</name>
    <dbReference type="NCBI Taxonomy" id="3702"/>
    <lineage>
        <taxon>Eukaryota</taxon>
        <taxon>Viridiplantae</taxon>
        <taxon>Streptophyta</taxon>
        <taxon>Embryophyta</taxon>
        <taxon>Tracheophyta</taxon>
        <taxon>Spermatophyta</taxon>
        <taxon>Magnoliopsida</taxon>
        <taxon>eudicotyledons</taxon>
        <taxon>Gunneridae</taxon>
        <taxon>Pentapetalae</taxon>
        <taxon>rosids</taxon>
        <taxon>malvids</taxon>
        <taxon>Brassicales</taxon>
        <taxon>Brassicaceae</taxon>
        <taxon>Camelineae</taxon>
        <taxon>Arabidopsis</taxon>
    </lineage>
</organism>
<protein>
    <recommendedName>
        <fullName>Cation/H(+) antiporter 26</fullName>
    </recommendedName>
    <alternativeName>
        <fullName>Protein CATION/H+ EXCHANGER 26</fullName>
        <shortName>AtCHX26</shortName>
    </alternativeName>
</protein>
<feature type="chain" id="PRO_0000394995" description="Cation/H(+) antiporter 26">
    <location>
        <begin position="1"/>
        <end position="784"/>
    </location>
</feature>
<feature type="transmembrane region" description="Helical" evidence="2">
    <location>
        <begin position="38"/>
        <end position="58"/>
    </location>
</feature>
<feature type="transmembrane region" description="Helical" evidence="2">
    <location>
        <begin position="61"/>
        <end position="81"/>
    </location>
</feature>
<feature type="transmembrane region" description="Helical" evidence="2">
    <location>
        <begin position="97"/>
        <end position="117"/>
    </location>
</feature>
<feature type="transmembrane region" description="Helical" evidence="2">
    <location>
        <begin position="130"/>
        <end position="150"/>
    </location>
</feature>
<feature type="transmembrane region" description="Helical" evidence="2">
    <location>
        <begin position="201"/>
        <end position="221"/>
    </location>
</feature>
<feature type="transmembrane region" description="Helical" evidence="2">
    <location>
        <begin position="240"/>
        <end position="260"/>
    </location>
</feature>
<feature type="transmembrane region" description="Helical" evidence="2">
    <location>
        <begin position="286"/>
        <end position="306"/>
    </location>
</feature>
<feature type="transmembrane region" description="Helical" evidence="2">
    <location>
        <begin position="321"/>
        <end position="341"/>
    </location>
</feature>
<feature type="transmembrane region" description="Helical" evidence="2">
    <location>
        <begin position="351"/>
        <end position="371"/>
    </location>
</feature>
<feature type="transmembrane region" description="Helical" evidence="2">
    <location>
        <begin position="376"/>
        <end position="396"/>
    </location>
</feature>
<feature type="transmembrane region" description="Helical" evidence="2">
    <location>
        <begin position="413"/>
        <end position="433"/>
    </location>
</feature>
<reference key="1">
    <citation type="journal article" date="2000" name="Nature">
        <title>Sequence and analysis of chromosome 5 of the plant Arabidopsis thaliana.</title>
        <authorList>
            <person name="Tabata S."/>
            <person name="Kaneko T."/>
            <person name="Nakamura Y."/>
            <person name="Kotani H."/>
            <person name="Kato T."/>
            <person name="Asamizu E."/>
            <person name="Miyajima N."/>
            <person name="Sasamoto S."/>
            <person name="Kimura T."/>
            <person name="Hosouchi T."/>
            <person name="Kawashima K."/>
            <person name="Kohara M."/>
            <person name="Matsumoto M."/>
            <person name="Matsuno A."/>
            <person name="Muraki A."/>
            <person name="Nakayama S."/>
            <person name="Nakazaki N."/>
            <person name="Naruo K."/>
            <person name="Okumura S."/>
            <person name="Shinpo S."/>
            <person name="Takeuchi C."/>
            <person name="Wada T."/>
            <person name="Watanabe A."/>
            <person name="Yamada M."/>
            <person name="Yasuda M."/>
            <person name="Sato S."/>
            <person name="de la Bastide M."/>
            <person name="Huang E."/>
            <person name="Spiegel L."/>
            <person name="Gnoj L."/>
            <person name="O'Shaughnessy A."/>
            <person name="Preston R."/>
            <person name="Habermann K."/>
            <person name="Murray J."/>
            <person name="Johnson D."/>
            <person name="Rohlfing T."/>
            <person name="Nelson J."/>
            <person name="Stoneking T."/>
            <person name="Pepin K."/>
            <person name="Spieth J."/>
            <person name="Sekhon M."/>
            <person name="Armstrong J."/>
            <person name="Becker M."/>
            <person name="Belter E."/>
            <person name="Cordum H."/>
            <person name="Cordes M."/>
            <person name="Courtney L."/>
            <person name="Courtney W."/>
            <person name="Dante M."/>
            <person name="Du H."/>
            <person name="Edwards J."/>
            <person name="Fryman J."/>
            <person name="Haakensen B."/>
            <person name="Lamar E."/>
            <person name="Latreille P."/>
            <person name="Leonard S."/>
            <person name="Meyer R."/>
            <person name="Mulvaney E."/>
            <person name="Ozersky P."/>
            <person name="Riley A."/>
            <person name="Strowmatt C."/>
            <person name="Wagner-McPherson C."/>
            <person name="Wollam A."/>
            <person name="Yoakum M."/>
            <person name="Bell M."/>
            <person name="Dedhia N."/>
            <person name="Parnell L."/>
            <person name="Shah R."/>
            <person name="Rodriguez M."/>
            <person name="Hoon See L."/>
            <person name="Vil D."/>
            <person name="Baker J."/>
            <person name="Kirchoff K."/>
            <person name="Toth K."/>
            <person name="King L."/>
            <person name="Bahret A."/>
            <person name="Miller B."/>
            <person name="Marra M.A."/>
            <person name="Martienssen R."/>
            <person name="McCombie W.R."/>
            <person name="Wilson R.K."/>
            <person name="Murphy G."/>
            <person name="Bancroft I."/>
            <person name="Volckaert G."/>
            <person name="Wambutt R."/>
            <person name="Duesterhoeft A."/>
            <person name="Stiekema W."/>
            <person name="Pohl T."/>
            <person name="Entian K.-D."/>
            <person name="Terryn N."/>
            <person name="Hartley N."/>
            <person name="Bent E."/>
            <person name="Johnson S."/>
            <person name="Langham S.-A."/>
            <person name="McCullagh B."/>
            <person name="Robben J."/>
            <person name="Grymonprez B."/>
            <person name="Zimmermann W."/>
            <person name="Ramsperger U."/>
            <person name="Wedler H."/>
            <person name="Balke K."/>
            <person name="Wedler E."/>
            <person name="Peters S."/>
            <person name="van Staveren M."/>
            <person name="Dirkse W."/>
            <person name="Mooijman P."/>
            <person name="Klein Lankhorst R."/>
            <person name="Weitzenegger T."/>
            <person name="Bothe G."/>
            <person name="Rose M."/>
            <person name="Hauf J."/>
            <person name="Berneiser S."/>
            <person name="Hempel S."/>
            <person name="Feldpausch M."/>
            <person name="Lamberth S."/>
            <person name="Villarroel R."/>
            <person name="Gielen J."/>
            <person name="Ardiles W."/>
            <person name="Bents O."/>
            <person name="Lemcke K."/>
            <person name="Kolesov G."/>
            <person name="Mayer K.F.X."/>
            <person name="Rudd S."/>
            <person name="Schoof H."/>
            <person name="Schueller C."/>
            <person name="Zaccaria P."/>
            <person name="Mewes H.-W."/>
            <person name="Bevan M."/>
            <person name="Fransz P.F."/>
        </authorList>
    </citation>
    <scope>NUCLEOTIDE SEQUENCE [LARGE SCALE GENOMIC DNA]</scope>
    <source>
        <strain>cv. Columbia</strain>
    </source>
</reference>
<reference key="2">
    <citation type="journal article" date="2017" name="Plant J.">
        <title>Araport11: a complete reannotation of the Arabidopsis thaliana reference genome.</title>
        <authorList>
            <person name="Cheng C.Y."/>
            <person name="Krishnakumar V."/>
            <person name="Chan A.P."/>
            <person name="Thibaud-Nissen F."/>
            <person name="Schobel S."/>
            <person name="Town C.D."/>
        </authorList>
    </citation>
    <scope>GENOME REANNOTATION</scope>
    <source>
        <strain>cv. Columbia</strain>
    </source>
</reference>
<reference key="3">
    <citation type="journal article" date="2001" name="Plant Physiol.">
        <title>Phylogenetic relationships within cation transporter families of Arabidopsis.</title>
        <authorList>
            <person name="Maeser P."/>
            <person name="Thomine S."/>
            <person name="Schroeder J.I."/>
            <person name="Ward J.M."/>
            <person name="Hirschi K."/>
            <person name="Sze H."/>
            <person name="Talke I.N."/>
            <person name="Amtmann A."/>
            <person name="Maathuis F.J.M."/>
            <person name="Sanders D."/>
            <person name="Harper J.F."/>
            <person name="Tchieu J."/>
            <person name="Gribskov M."/>
            <person name="Persans M.W."/>
            <person name="Salt D.E."/>
            <person name="Kim S.A."/>
            <person name="Guerinot M.L."/>
        </authorList>
    </citation>
    <scope>GENE FAMILY</scope>
    <scope>NOMENCLATURE</scope>
</reference>
<reference key="4">
    <citation type="journal article" date="2004" name="Plant Physiol.">
        <title>Expression patterns of a novel AtCHX gene family highlight potential roles in osmotic adjustment and K+ homeostasis in pollen development.</title>
        <authorList>
            <person name="Sze H."/>
            <person name="Padmanaban S."/>
            <person name="Cellier F."/>
            <person name="Honys D."/>
            <person name="Cheng N.-H."/>
            <person name="Bock K.W."/>
            <person name="Conejero G."/>
            <person name="Li X."/>
            <person name="Twell D."/>
            <person name="Ward J.M."/>
            <person name="Hirschi K.D."/>
        </authorList>
    </citation>
    <scope>TISSUE SPECIFICITY</scope>
    <scope>GENE FAMILY</scope>
    <scope>NOMENCLATURE</scope>
</reference>
<gene>
    <name type="primary">CHX26</name>
    <name type="ordered locus">At5g01680</name>
    <name type="ORF">F7A7_200</name>
</gene>
<dbReference type="EMBL" id="AL161946">
    <property type="protein sequence ID" value="CAB82284.1"/>
    <property type="status" value="ALT_SEQ"/>
    <property type="molecule type" value="Genomic_DNA"/>
</dbReference>
<dbReference type="EMBL" id="CP002688">
    <property type="protein sequence ID" value="AED90376.1"/>
    <property type="molecule type" value="Genomic_DNA"/>
</dbReference>
<dbReference type="PIR" id="T48189">
    <property type="entry name" value="T48189"/>
</dbReference>
<dbReference type="RefSeq" id="NP_195788.2">
    <property type="nucleotide sequence ID" value="NM_120246.2"/>
</dbReference>
<dbReference type="SMR" id="Q9M008"/>
<dbReference type="TCDB" id="2.A.37.4.6">
    <property type="family name" value="the monovalent cation:proton antiporter-2 (cpa2) family"/>
</dbReference>
<dbReference type="PaxDb" id="3702-AT5G01680.1"/>
<dbReference type="EnsemblPlants" id="AT5G01680.1">
    <property type="protein sequence ID" value="AT5G01680.1"/>
    <property type="gene ID" value="AT5G01680"/>
</dbReference>
<dbReference type="GeneID" id="831698"/>
<dbReference type="Gramene" id="AT5G01680.1">
    <property type="protein sequence ID" value="AT5G01680.1"/>
    <property type="gene ID" value="AT5G01680"/>
</dbReference>
<dbReference type="KEGG" id="ath:AT5G01680"/>
<dbReference type="Araport" id="AT5G01680"/>
<dbReference type="TAIR" id="AT5G01680">
    <property type="gene designation" value="CHX26"/>
</dbReference>
<dbReference type="eggNOG" id="KOG1650">
    <property type="taxonomic scope" value="Eukaryota"/>
</dbReference>
<dbReference type="HOGENOM" id="CLU_005126_6_1_1"/>
<dbReference type="InParanoid" id="Q9M008"/>
<dbReference type="OMA" id="FMFISYI"/>
<dbReference type="PhylomeDB" id="Q9M008"/>
<dbReference type="PRO" id="PR:Q9M008"/>
<dbReference type="Proteomes" id="UP000006548">
    <property type="component" value="Chromosome 5"/>
</dbReference>
<dbReference type="ExpressionAtlas" id="Q9M008">
    <property type="expression patterns" value="baseline and differential"/>
</dbReference>
<dbReference type="GO" id="GO:0016020">
    <property type="term" value="C:membrane"/>
    <property type="evidence" value="ECO:0007669"/>
    <property type="project" value="UniProtKB-SubCell"/>
</dbReference>
<dbReference type="GO" id="GO:0015297">
    <property type="term" value="F:antiporter activity"/>
    <property type="evidence" value="ECO:0007669"/>
    <property type="project" value="UniProtKB-KW"/>
</dbReference>
<dbReference type="GO" id="GO:0006813">
    <property type="term" value="P:potassium ion transport"/>
    <property type="evidence" value="ECO:0007669"/>
    <property type="project" value="UniProtKB-KW"/>
</dbReference>
<dbReference type="GO" id="GO:1902600">
    <property type="term" value="P:proton transmembrane transport"/>
    <property type="evidence" value="ECO:0007669"/>
    <property type="project" value="InterPro"/>
</dbReference>
<dbReference type="FunFam" id="1.20.1530.20:FF:000022">
    <property type="entry name" value="Cation/H(+) antiporter 24"/>
    <property type="match status" value="1"/>
</dbReference>
<dbReference type="Gene3D" id="1.20.1530.20">
    <property type="match status" value="1"/>
</dbReference>
<dbReference type="InterPro" id="IPR006153">
    <property type="entry name" value="Cation/H_exchanger_TM"/>
</dbReference>
<dbReference type="InterPro" id="IPR050794">
    <property type="entry name" value="CPA2_transporter"/>
</dbReference>
<dbReference type="InterPro" id="IPR038770">
    <property type="entry name" value="Na+/solute_symporter_sf"/>
</dbReference>
<dbReference type="PANTHER" id="PTHR32468">
    <property type="entry name" value="CATION/H + ANTIPORTER"/>
    <property type="match status" value="1"/>
</dbReference>
<dbReference type="PANTHER" id="PTHR32468:SF96">
    <property type="entry name" value="CATION_H(+) ANTIPORTER 26-RELATED"/>
    <property type="match status" value="1"/>
</dbReference>
<dbReference type="Pfam" id="PF23259">
    <property type="entry name" value="CHX17_C"/>
    <property type="match status" value="1"/>
</dbReference>
<dbReference type="Pfam" id="PF00999">
    <property type="entry name" value="Na_H_Exchanger"/>
    <property type="match status" value="1"/>
</dbReference>
<sequence length="784" mass="87038">MNNSVTSNGTHEFVCEAWLGSSSGGLLRGDDPLKYSTPLLLLLISLVSSLSSVFQALLRPLANVDFVTQILAGIFLGPSALGQNIDLVKKLFNTRSYFIIESFEAISFMFISYISTAQVDMGVIKRGGKLAIINGLSLFLFPYVVGAIACTVITSNIRGTVAKNNPEQLHNLLTNQSVVYFQVAYSVLSNLKMLNSEPGRLALSSIMVANCFGWGFFLLLITFDSFLHQNYSKTTYLPTFTKVLLLVGIVVVCRPIFNWIVKRTPEGKKLKASHLCTICVMLCTATFLSETVGFPYVVGSVALGLVTPKTPPFGTGLTDKIGSFCYAVLMPCYVIGIGNKVDFFSFNLRDIISLEFLIFTISAAKFASIVLPSLYFQVPISHAVIVGFIVCIQGIYDVQIFKQLLNYKNISHEAFGIMVISAMVHSTIFTAIVKNLYGWVQRKHITYRRQTVQHYEPNKPLKILTCFYHRETVPPILTVLELSTCPSSASSHSIVSVNLEELEQNNVPLLIQHHPGHNDESSTSSSRRDQISKAFEKFRSGHDLQENVSVECFTAVAPSKTMHEDVCALAFEKETDLIIFGMADGTAAERRLCRNVRNASPSSVAVLMDQGRLPDFKNMGTAMKNGSMRINICSIFLGGADDRETLAFAVRMTNQPYVNLTVLKLVDGENVSHLNDVVEKRLDFRTIEKFRQDTMNKHNVALREVWIKEASDLVNLLREEGNNYDLIMVGIRHEKSFEVLQGLSVWSEIEELGEIGDLLVSRDLKLSASVLAVQQQLSSVVEEV</sequence>
<name>CHX26_ARATH</name>
<accession>Q9M008</accession>
<evidence type="ECO:0000250" key="1"/>
<evidence type="ECO:0000255" key="2"/>
<evidence type="ECO:0000269" key="3">
    <source>
    </source>
</evidence>
<evidence type="ECO:0000305" key="4"/>
<comment type="function">
    <text evidence="1">May operate as a cation/H(+) antiporter.</text>
</comment>
<comment type="subcellular location">
    <subcellularLocation>
        <location evidence="1">Membrane</location>
        <topology evidence="1">Multi-pass membrane protein</topology>
    </subcellularLocation>
</comment>
<comment type="tissue specificity">
    <text evidence="3">Expressed in pollen.</text>
</comment>
<comment type="similarity">
    <text evidence="4">Belongs to the monovalent cation:proton antiporter 2 (CPA2) transporter (TC 2.A.37) family. CHX (TC 2.A.37.4) subfamily.</text>
</comment>
<comment type="sequence caution" evidence="4">
    <conflict type="erroneous gene model prediction">
        <sequence resource="EMBL-CDS" id="CAB82284"/>
    </conflict>
</comment>